<evidence type="ECO:0000255" key="1">
    <source>
        <dbReference type="HAMAP-Rule" id="MF_01657"/>
    </source>
</evidence>
<comment type="catalytic activity">
    <reaction evidence="1">
        <text>acetaldehyde + NAD(+) + CoA = acetyl-CoA + NADH + H(+)</text>
        <dbReference type="Rhea" id="RHEA:23288"/>
        <dbReference type="ChEBI" id="CHEBI:15343"/>
        <dbReference type="ChEBI" id="CHEBI:15378"/>
        <dbReference type="ChEBI" id="CHEBI:57287"/>
        <dbReference type="ChEBI" id="CHEBI:57288"/>
        <dbReference type="ChEBI" id="CHEBI:57540"/>
        <dbReference type="ChEBI" id="CHEBI:57945"/>
        <dbReference type="EC" id="1.2.1.10"/>
    </reaction>
</comment>
<comment type="similarity">
    <text evidence="1">Belongs to the acetaldehyde dehydrogenase family.</text>
</comment>
<proteinExistence type="inferred from homology"/>
<feature type="chain" id="PRO_0000387721" description="Acetaldehyde dehydrogenase 2">
    <location>
        <begin position="1"/>
        <end position="292"/>
    </location>
</feature>
<feature type="active site" description="Acyl-thioester intermediate" evidence="1">
    <location>
        <position position="126"/>
    </location>
</feature>
<feature type="binding site" evidence="1">
    <location>
        <begin position="11"/>
        <end position="14"/>
    </location>
    <ligand>
        <name>NAD(+)</name>
        <dbReference type="ChEBI" id="CHEBI:57540"/>
    </ligand>
</feature>
<feature type="binding site" evidence="1">
    <location>
        <begin position="157"/>
        <end position="165"/>
    </location>
    <ligand>
        <name>NAD(+)</name>
        <dbReference type="ChEBI" id="CHEBI:57540"/>
    </ligand>
</feature>
<feature type="binding site" evidence="1">
    <location>
        <position position="266"/>
    </location>
    <ligand>
        <name>NAD(+)</name>
        <dbReference type="ChEBI" id="CHEBI:57540"/>
    </ligand>
</feature>
<organism>
    <name type="scientific">Rhodococcus opacus (strain B4)</name>
    <dbReference type="NCBI Taxonomy" id="632772"/>
    <lineage>
        <taxon>Bacteria</taxon>
        <taxon>Bacillati</taxon>
        <taxon>Actinomycetota</taxon>
        <taxon>Actinomycetes</taxon>
        <taxon>Mycobacteriales</taxon>
        <taxon>Nocardiaceae</taxon>
        <taxon>Rhodococcus</taxon>
    </lineage>
</organism>
<reference key="1">
    <citation type="submission" date="2009-03" db="EMBL/GenBank/DDBJ databases">
        <title>Comparison of the complete genome sequences of Rhodococcus erythropolis PR4 and Rhodococcus opacus B4.</title>
        <authorList>
            <person name="Takarada H."/>
            <person name="Sekine M."/>
            <person name="Hosoyama A."/>
            <person name="Yamada R."/>
            <person name="Fujisawa T."/>
            <person name="Omata S."/>
            <person name="Shimizu A."/>
            <person name="Tsukatani N."/>
            <person name="Tanikawa S."/>
            <person name="Fujita N."/>
            <person name="Harayama S."/>
        </authorList>
    </citation>
    <scope>NUCLEOTIDE SEQUENCE [LARGE SCALE GENOMIC DNA]</scope>
    <source>
        <strain>B4</strain>
    </source>
</reference>
<sequence length="292" mass="30451">MSRKSAAIIGSGNIGTDLMYKLLRSEHIEPRYMVGIDPDSEGLARARQEGLEASAGGLDWLLAQPELPDFVFEATSAKIHAAAAPRYADAGITAIDLTPASVGPYVVPAVNLDAHLGAPNVNMVSCAGQATIPILYAINEVADASYGEIVAAIASHSAGPGTRQNLSEFSEKTGKALAQVAGADRAKAISVINPAEPPMNMRDTVYAKVRNPDPAAIEKAVIDMVAKVQQYVPGYSLRLVDVDGDLVTVMLEVVGAGDFLPTYAGNLDIITAAAVQVADVMAQQNLVQGAAQ</sequence>
<protein>
    <recommendedName>
        <fullName evidence="1">Acetaldehyde dehydrogenase 2</fullName>
        <ecNumber evidence="1">1.2.1.10</ecNumber>
    </recommendedName>
    <alternativeName>
        <fullName evidence="1">Acetaldehyde dehydrogenase [acetylating] 2</fullName>
    </alternativeName>
</protein>
<keyword id="KW-0058">Aromatic hydrocarbons catabolism</keyword>
<keyword id="KW-0520">NAD</keyword>
<keyword id="KW-0560">Oxidoreductase</keyword>
<accession>C1B8H9</accession>
<gene>
    <name type="ordered locus">ROP_37350</name>
</gene>
<name>ACDH2_RHOOB</name>
<dbReference type="EC" id="1.2.1.10" evidence="1"/>
<dbReference type="EMBL" id="AP011115">
    <property type="protein sequence ID" value="BAH51982.1"/>
    <property type="molecule type" value="Genomic_DNA"/>
</dbReference>
<dbReference type="RefSeq" id="WP_012690921.1">
    <property type="nucleotide sequence ID" value="NC_012522.1"/>
</dbReference>
<dbReference type="SMR" id="C1B8H9"/>
<dbReference type="STRING" id="632772.ROP_37350"/>
<dbReference type="KEGG" id="rop:ROP_37350"/>
<dbReference type="PATRIC" id="fig|632772.20.peg.3924"/>
<dbReference type="HOGENOM" id="CLU_062208_0_0_11"/>
<dbReference type="OrthoDB" id="9786743at2"/>
<dbReference type="Proteomes" id="UP000002212">
    <property type="component" value="Chromosome"/>
</dbReference>
<dbReference type="GO" id="GO:0008774">
    <property type="term" value="F:acetaldehyde dehydrogenase (acetylating) activity"/>
    <property type="evidence" value="ECO:0007669"/>
    <property type="project" value="UniProtKB-UniRule"/>
</dbReference>
<dbReference type="GO" id="GO:0051287">
    <property type="term" value="F:NAD binding"/>
    <property type="evidence" value="ECO:0007669"/>
    <property type="project" value="UniProtKB-UniRule"/>
</dbReference>
<dbReference type="GO" id="GO:0009056">
    <property type="term" value="P:catabolic process"/>
    <property type="evidence" value="ECO:0007669"/>
    <property type="project" value="UniProtKB-KW"/>
</dbReference>
<dbReference type="CDD" id="cd23933">
    <property type="entry name" value="ALDH_C"/>
    <property type="match status" value="1"/>
</dbReference>
<dbReference type="Gene3D" id="3.30.360.10">
    <property type="entry name" value="Dihydrodipicolinate Reductase, domain 2"/>
    <property type="match status" value="1"/>
</dbReference>
<dbReference type="Gene3D" id="3.40.50.720">
    <property type="entry name" value="NAD(P)-binding Rossmann-like Domain"/>
    <property type="match status" value="1"/>
</dbReference>
<dbReference type="HAMAP" id="MF_01657">
    <property type="entry name" value="Ac_ald_DH_ac"/>
    <property type="match status" value="1"/>
</dbReference>
<dbReference type="InterPro" id="IPR003361">
    <property type="entry name" value="Acetaldehyde_dehydrogenase"/>
</dbReference>
<dbReference type="InterPro" id="IPR015426">
    <property type="entry name" value="Acetylaldehyde_DH_C"/>
</dbReference>
<dbReference type="InterPro" id="IPR036291">
    <property type="entry name" value="NAD(P)-bd_dom_sf"/>
</dbReference>
<dbReference type="InterPro" id="IPR000534">
    <property type="entry name" value="Semialdehyde_DH_NAD-bd"/>
</dbReference>
<dbReference type="NCBIfam" id="TIGR03215">
    <property type="entry name" value="ac_ald_DH_ac"/>
    <property type="match status" value="1"/>
</dbReference>
<dbReference type="NCBIfam" id="NF006157">
    <property type="entry name" value="PRK08300.1"/>
    <property type="match status" value="1"/>
</dbReference>
<dbReference type="Pfam" id="PF09290">
    <property type="entry name" value="AcetDehyd-dimer"/>
    <property type="match status" value="1"/>
</dbReference>
<dbReference type="Pfam" id="PF01118">
    <property type="entry name" value="Semialdhyde_dh"/>
    <property type="match status" value="1"/>
</dbReference>
<dbReference type="PIRSF" id="PIRSF015689">
    <property type="entry name" value="Actaldh_dh_actl"/>
    <property type="match status" value="1"/>
</dbReference>
<dbReference type="SMART" id="SM00859">
    <property type="entry name" value="Semialdhyde_dh"/>
    <property type="match status" value="1"/>
</dbReference>
<dbReference type="SUPFAM" id="SSF55347">
    <property type="entry name" value="Glyceraldehyde-3-phosphate dehydrogenase-like, C-terminal domain"/>
    <property type="match status" value="1"/>
</dbReference>
<dbReference type="SUPFAM" id="SSF51735">
    <property type="entry name" value="NAD(P)-binding Rossmann-fold domains"/>
    <property type="match status" value="1"/>
</dbReference>